<keyword id="KW-0027">Amidation</keyword>
<keyword id="KW-0878">Amphibian defense peptide</keyword>
<keyword id="KW-0929">Antimicrobial</keyword>
<keyword id="KW-0903">Direct protein sequencing</keyword>
<keyword id="KW-0964">Secreted</keyword>
<organism>
    <name type="scientific">Phasmahyla jandaia</name>
    <name type="common">Jandaia leaf frog</name>
    <name type="synonym">Phyllomedusa jandaia</name>
    <dbReference type="NCBI Taxonomy" id="762504"/>
    <lineage>
        <taxon>Eukaryota</taxon>
        <taxon>Metazoa</taxon>
        <taxon>Chordata</taxon>
        <taxon>Craniata</taxon>
        <taxon>Vertebrata</taxon>
        <taxon>Euteleostomi</taxon>
        <taxon>Amphibia</taxon>
        <taxon>Batrachia</taxon>
        <taxon>Anura</taxon>
        <taxon>Neobatrachia</taxon>
        <taxon>Hyloidea</taxon>
        <taxon>Hylidae</taxon>
        <taxon>Phyllomedusinae</taxon>
        <taxon>Phasmahyla</taxon>
    </lineage>
</organism>
<protein>
    <recommendedName>
        <fullName evidence="4">Phylloseptin-J7</fullName>
        <shortName evidence="4">PLS-J7</shortName>
        <shortName>PS-J7</shortName>
    </recommendedName>
</protein>
<dbReference type="GO" id="GO:0005576">
    <property type="term" value="C:extracellular region"/>
    <property type="evidence" value="ECO:0007669"/>
    <property type="project" value="UniProtKB-SubCell"/>
</dbReference>
<dbReference type="GO" id="GO:0006952">
    <property type="term" value="P:defense response"/>
    <property type="evidence" value="ECO:0007669"/>
    <property type="project" value="UniProtKB-KW"/>
</dbReference>
<comment type="function">
    <text evidence="1">Has antimicrobial activity.</text>
</comment>
<comment type="subcellular location">
    <subcellularLocation>
        <location evidence="3">Secreted</location>
    </subcellularLocation>
</comment>
<comment type="tissue specificity">
    <text evidence="3">Expressed by the skin glands.</text>
</comment>
<comment type="mass spectrometry" mass="1987.1" method="MALDI" evidence="3"/>
<comment type="similarity">
    <text evidence="2">Belongs to the frog skin active peptide (FSAP) family. Phylloseptin subfamily.</text>
</comment>
<proteinExistence type="evidence at protein level"/>
<reference evidence="5" key="1">
    <citation type="journal article" date="2011" name="Toxicon">
        <title>Peptidomic dissection of the skin secretion of Phasmahyla jandaia (Bokermann and Sazima, 1978) (Anura, Hylidae, Phyllomedusinae).</title>
        <authorList>
            <person name="Rates B."/>
            <person name="Silva L.P."/>
            <person name="Ireno I.C."/>
            <person name="Leite F.S."/>
            <person name="Borges M.H."/>
            <person name="Bloch C. Jr."/>
            <person name="De Lima M.E."/>
            <person name="Pimenta A.M."/>
        </authorList>
    </citation>
    <scope>PROTEIN SEQUENCE</scope>
    <scope>SUBCELLULAR LOCATION</scope>
    <scope>TISSUE SPECIFICITY</scope>
    <scope>MASS SPECTROMETRY</scope>
    <scope>AMIDATION AT LEU-19</scope>
    <source>
        <tissue evidence="3">Skin secretion</tissue>
    </source>
</reference>
<evidence type="ECO:0000250" key="1">
    <source>
        <dbReference type="UniProtKB" id="P84572"/>
    </source>
</evidence>
<evidence type="ECO:0000255" key="2"/>
<evidence type="ECO:0000269" key="3">
    <source>
    </source>
</evidence>
<evidence type="ECO:0000303" key="4">
    <source>
    </source>
</evidence>
<evidence type="ECO:0000305" key="5"/>
<accession>P86620</accession>
<name>PLS7_PHAJA</name>
<feature type="peptide" id="PRO_0000404626" description="Phylloseptin-J7" evidence="1 5">
    <location>
        <begin position="1"/>
        <end position="19"/>
    </location>
</feature>
<feature type="modified residue" description="Leucine amide" evidence="3">
    <location>
        <position position="19"/>
    </location>
</feature>
<feature type="unsure residue" description="L or I" evidence="3">
    <location>
        <position position="2"/>
    </location>
</feature>
<feature type="unsure residue" description="L or I" evidence="3">
    <location>
        <position position="4"/>
    </location>
</feature>
<feature type="unsure residue" description="I or L" evidence="3">
    <location>
        <position position="5"/>
    </location>
</feature>
<feature type="unsure residue" description="I or L" evidence="3">
    <location>
        <position position="9"/>
    </location>
</feature>
<feature type="unsure residue" description="I or L" evidence="3">
    <location>
        <position position="12"/>
    </location>
</feature>
<feature type="unsure residue" description="I or L" evidence="3">
    <location>
        <position position="15"/>
    </location>
</feature>
<feature type="unsure residue" description="L or I" evidence="3">
    <location>
        <position position="19"/>
    </location>
</feature>
<sequence length="19" mass="1989">FLSLIPHAISAISAIADHL</sequence>